<sequence>MSESLRIIFAGTPDFAARHLDALLSSGHNVVGVFTQPDRPAGRGKKLMPSPVKVLAEEKGLPVFQPVSLRPQENQQLVAELQADVMVVVAYGLILPKAVLEMPRLGCINVHGSLLPRWRGAAPIQRSLWAGDAETGVTIMQMDVGLDTGDMLYKLSCPITAEDTSGTLYDKLAELGPQGLITTLKQLADGTAKPEVQDETLVTYAEKLSKEEARIDWSLSAAQLERCIRAFNPWPMSWLEIEGQPVKVWKASVIDTATNAAPGTILEANKQGIQVATGDGILNLLSLQPAGKKAMSAQDLLNSRREWFVPGNRLV</sequence>
<comment type="function">
    <text evidence="1">Attaches a formyl group to the free amino group of methionyl-tRNA(fMet). The formyl group appears to play a dual role in the initiator identity of N-formylmethionyl-tRNA by promoting its recognition by IF2 and preventing the misappropriation of this tRNA by the elongation apparatus.</text>
</comment>
<comment type="catalytic activity">
    <reaction evidence="1">
        <text>L-methionyl-tRNA(fMet) + (6R)-10-formyltetrahydrofolate = N-formyl-L-methionyl-tRNA(fMet) + (6S)-5,6,7,8-tetrahydrofolate + H(+)</text>
        <dbReference type="Rhea" id="RHEA:24380"/>
        <dbReference type="Rhea" id="RHEA-COMP:9952"/>
        <dbReference type="Rhea" id="RHEA-COMP:9953"/>
        <dbReference type="ChEBI" id="CHEBI:15378"/>
        <dbReference type="ChEBI" id="CHEBI:57453"/>
        <dbReference type="ChEBI" id="CHEBI:78530"/>
        <dbReference type="ChEBI" id="CHEBI:78844"/>
        <dbReference type="ChEBI" id="CHEBI:195366"/>
        <dbReference type="EC" id="2.1.2.9"/>
    </reaction>
</comment>
<comment type="similarity">
    <text evidence="1">Belongs to the Fmt family.</text>
</comment>
<feature type="chain" id="PRO_1000203854" description="Methionyl-tRNA formyltransferase">
    <location>
        <begin position="1"/>
        <end position="315"/>
    </location>
</feature>
<feature type="binding site" evidence="1">
    <location>
        <begin position="113"/>
        <end position="116"/>
    </location>
    <ligand>
        <name>(6S)-5,6,7,8-tetrahydrofolate</name>
        <dbReference type="ChEBI" id="CHEBI:57453"/>
    </ligand>
</feature>
<gene>
    <name evidence="1" type="primary">fmt</name>
    <name type="ordered locus">BWG_2978</name>
</gene>
<evidence type="ECO:0000255" key="1">
    <source>
        <dbReference type="HAMAP-Rule" id="MF_00182"/>
    </source>
</evidence>
<dbReference type="EC" id="2.1.2.9" evidence="1"/>
<dbReference type="EMBL" id="CP001396">
    <property type="protein sequence ID" value="ACR61730.1"/>
    <property type="molecule type" value="Genomic_DNA"/>
</dbReference>
<dbReference type="RefSeq" id="WP_000004473.1">
    <property type="nucleotide sequence ID" value="NC_012759.1"/>
</dbReference>
<dbReference type="SMR" id="C4ZUE2"/>
<dbReference type="KEGG" id="ebw:BWG_2978"/>
<dbReference type="HOGENOM" id="CLU_033347_1_2_6"/>
<dbReference type="GO" id="GO:0005829">
    <property type="term" value="C:cytosol"/>
    <property type="evidence" value="ECO:0007669"/>
    <property type="project" value="TreeGrafter"/>
</dbReference>
<dbReference type="GO" id="GO:0004479">
    <property type="term" value="F:methionyl-tRNA formyltransferase activity"/>
    <property type="evidence" value="ECO:0007669"/>
    <property type="project" value="UniProtKB-UniRule"/>
</dbReference>
<dbReference type="CDD" id="cd08646">
    <property type="entry name" value="FMT_core_Met-tRNA-FMT_N"/>
    <property type="match status" value="1"/>
</dbReference>
<dbReference type="CDD" id="cd08704">
    <property type="entry name" value="Met_tRNA_FMT_C"/>
    <property type="match status" value="1"/>
</dbReference>
<dbReference type="FunFam" id="3.10.25.10:FF:000001">
    <property type="entry name" value="Methionyl-tRNA formyltransferase"/>
    <property type="match status" value="1"/>
</dbReference>
<dbReference type="FunFam" id="3.40.50.12230:FF:000001">
    <property type="entry name" value="Methionyl-tRNA formyltransferase"/>
    <property type="match status" value="1"/>
</dbReference>
<dbReference type="FunFam" id="3.40.50.170:FF:000003">
    <property type="entry name" value="Methionyl-tRNA formyltransferase"/>
    <property type="match status" value="1"/>
</dbReference>
<dbReference type="Gene3D" id="3.10.25.10">
    <property type="entry name" value="Formyl transferase, C-terminal domain"/>
    <property type="match status" value="1"/>
</dbReference>
<dbReference type="Gene3D" id="3.40.50.170">
    <property type="entry name" value="Formyl transferase, N-terminal domain"/>
    <property type="match status" value="1"/>
</dbReference>
<dbReference type="HAMAP" id="MF_00182">
    <property type="entry name" value="Formyl_trans"/>
    <property type="match status" value="1"/>
</dbReference>
<dbReference type="InterPro" id="IPR005794">
    <property type="entry name" value="Fmt"/>
</dbReference>
<dbReference type="InterPro" id="IPR005793">
    <property type="entry name" value="Formyl_trans_C"/>
</dbReference>
<dbReference type="InterPro" id="IPR037022">
    <property type="entry name" value="Formyl_trans_C_sf"/>
</dbReference>
<dbReference type="InterPro" id="IPR002376">
    <property type="entry name" value="Formyl_transf_N"/>
</dbReference>
<dbReference type="InterPro" id="IPR036477">
    <property type="entry name" value="Formyl_transf_N_sf"/>
</dbReference>
<dbReference type="InterPro" id="IPR011034">
    <property type="entry name" value="Formyl_transferase-like_C_sf"/>
</dbReference>
<dbReference type="InterPro" id="IPR001555">
    <property type="entry name" value="GART_AS"/>
</dbReference>
<dbReference type="InterPro" id="IPR044135">
    <property type="entry name" value="Met-tRNA-FMT_C"/>
</dbReference>
<dbReference type="InterPro" id="IPR041711">
    <property type="entry name" value="Met-tRNA-FMT_N"/>
</dbReference>
<dbReference type="NCBIfam" id="TIGR00460">
    <property type="entry name" value="fmt"/>
    <property type="match status" value="1"/>
</dbReference>
<dbReference type="PANTHER" id="PTHR11138">
    <property type="entry name" value="METHIONYL-TRNA FORMYLTRANSFERASE"/>
    <property type="match status" value="1"/>
</dbReference>
<dbReference type="PANTHER" id="PTHR11138:SF5">
    <property type="entry name" value="METHIONYL-TRNA FORMYLTRANSFERASE, MITOCHONDRIAL"/>
    <property type="match status" value="1"/>
</dbReference>
<dbReference type="Pfam" id="PF02911">
    <property type="entry name" value="Formyl_trans_C"/>
    <property type="match status" value="1"/>
</dbReference>
<dbReference type="Pfam" id="PF00551">
    <property type="entry name" value="Formyl_trans_N"/>
    <property type="match status" value="1"/>
</dbReference>
<dbReference type="SUPFAM" id="SSF50486">
    <property type="entry name" value="FMT C-terminal domain-like"/>
    <property type="match status" value="1"/>
</dbReference>
<dbReference type="SUPFAM" id="SSF53328">
    <property type="entry name" value="Formyltransferase"/>
    <property type="match status" value="1"/>
</dbReference>
<dbReference type="PROSITE" id="PS00373">
    <property type="entry name" value="GART"/>
    <property type="match status" value="1"/>
</dbReference>
<protein>
    <recommendedName>
        <fullName evidence="1">Methionyl-tRNA formyltransferase</fullName>
        <ecNumber evidence="1">2.1.2.9</ecNumber>
    </recommendedName>
</protein>
<reference key="1">
    <citation type="journal article" date="2009" name="J. Bacteriol.">
        <title>Genomic sequencing reveals regulatory mutations and recombinational events in the widely used MC4100 lineage of Escherichia coli K-12.</title>
        <authorList>
            <person name="Ferenci T."/>
            <person name="Zhou Z."/>
            <person name="Betteridge T."/>
            <person name="Ren Y."/>
            <person name="Liu Y."/>
            <person name="Feng L."/>
            <person name="Reeves P.R."/>
            <person name="Wang L."/>
        </authorList>
    </citation>
    <scope>NUCLEOTIDE SEQUENCE [LARGE SCALE GENOMIC DNA]</scope>
    <source>
        <strain>K12 / MC4100 / BW2952</strain>
    </source>
</reference>
<name>FMT_ECOBW</name>
<proteinExistence type="inferred from homology"/>
<organism>
    <name type="scientific">Escherichia coli (strain K12 / MC4100 / BW2952)</name>
    <dbReference type="NCBI Taxonomy" id="595496"/>
    <lineage>
        <taxon>Bacteria</taxon>
        <taxon>Pseudomonadati</taxon>
        <taxon>Pseudomonadota</taxon>
        <taxon>Gammaproteobacteria</taxon>
        <taxon>Enterobacterales</taxon>
        <taxon>Enterobacteriaceae</taxon>
        <taxon>Escherichia</taxon>
    </lineage>
</organism>
<accession>C4ZUE2</accession>
<keyword id="KW-0648">Protein biosynthesis</keyword>
<keyword id="KW-0808">Transferase</keyword>